<evidence type="ECO:0000255" key="1">
    <source>
        <dbReference type="HAMAP-Rule" id="MF_00229"/>
    </source>
</evidence>
<name>HUTH_STAAC</name>
<organism>
    <name type="scientific">Staphylococcus aureus (strain COL)</name>
    <dbReference type="NCBI Taxonomy" id="93062"/>
    <lineage>
        <taxon>Bacteria</taxon>
        <taxon>Bacillati</taxon>
        <taxon>Bacillota</taxon>
        <taxon>Bacilli</taxon>
        <taxon>Bacillales</taxon>
        <taxon>Staphylococcaceae</taxon>
        <taxon>Staphylococcus</taxon>
    </lineage>
</organism>
<protein>
    <recommendedName>
        <fullName evidence="1">Histidine ammonia-lyase</fullName>
        <shortName evidence="1">Histidase</shortName>
        <ecNumber evidence="1">4.3.1.3</ecNumber>
    </recommendedName>
</protein>
<sequence length="504" mass="56076">MTLYLDGETLTIEDIKSFLQQQSKIEIIDDALERVKKSRAVVERIIENEETVYGITTGFGLFSDVRIDPTQYNELQVNLIRSHACGLGEPFSKEVALVMMILRLNTLLKGHSGATLELVRQLQFFINERIIPIIPQQGSLGASGDLAPLSHLALALIGEGKVLYRGEEKDSDDVLRELNRQPLNLQAKEGLALINGTQAMTAQGVISYIEAEDLGYQSEWIAALTHQSLNGIIDAYRHDVHAVRNFQEQINVAARMRDWLEGSTLTTRQSEIRVQDAYTLRCIPQIHGASFQVFNYVKQQLEFEMNAANDNPLIFEEANETFVISGGNFHGQPIAFALDHLKLGVSELANVSERRLERLVNPQLNGDLPAFLSPEPGLQSGAMIMQYAAASLVSENKTLAHPASVDSITSSANQEDHVSMGTTAARHGYQIIENARRVLAIECVIALQAAELKGVEGLSPKTRRKYDEFRSIVPSITHDRQFHKDIEAVAQYLKQSIYQTTACH</sequence>
<gene>
    <name evidence="1" type="primary">hutH</name>
    <name type="ordered locus">SACOL0008</name>
</gene>
<dbReference type="EC" id="4.3.1.3" evidence="1"/>
<dbReference type="EMBL" id="CP000046">
    <property type="protein sequence ID" value="AAW37396.1"/>
    <property type="molecule type" value="Genomic_DNA"/>
</dbReference>
<dbReference type="RefSeq" id="WP_000177464.1">
    <property type="nucleotide sequence ID" value="NZ_JBGOFO010000001.1"/>
</dbReference>
<dbReference type="SMR" id="Q5HJY8"/>
<dbReference type="KEGG" id="sac:SACOL0008"/>
<dbReference type="HOGENOM" id="CLU_014801_4_0_9"/>
<dbReference type="UniPathway" id="UPA00379">
    <property type="reaction ID" value="UER00549"/>
</dbReference>
<dbReference type="Proteomes" id="UP000000530">
    <property type="component" value="Chromosome"/>
</dbReference>
<dbReference type="GO" id="GO:0005737">
    <property type="term" value="C:cytoplasm"/>
    <property type="evidence" value="ECO:0007669"/>
    <property type="project" value="UniProtKB-SubCell"/>
</dbReference>
<dbReference type="GO" id="GO:0004397">
    <property type="term" value="F:histidine ammonia-lyase activity"/>
    <property type="evidence" value="ECO:0007669"/>
    <property type="project" value="UniProtKB-UniRule"/>
</dbReference>
<dbReference type="GO" id="GO:0019556">
    <property type="term" value="P:L-histidine catabolic process to glutamate and formamide"/>
    <property type="evidence" value="ECO:0007669"/>
    <property type="project" value="UniProtKB-UniPathway"/>
</dbReference>
<dbReference type="GO" id="GO:0019557">
    <property type="term" value="P:L-histidine catabolic process to glutamate and formate"/>
    <property type="evidence" value="ECO:0007669"/>
    <property type="project" value="UniProtKB-UniPathway"/>
</dbReference>
<dbReference type="CDD" id="cd00332">
    <property type="entry name" value="PAL-HAL"/>
    <property type="match status" value="1"/>
</dbReference>
<dbReference type="FunFam" id="1.10.275.10:FF:000008">
    <property type="entry name" value="Histidine ammonia-lyase"/>
    <property type="match status" value="1"/>
</dbReference>
<dbReference type="FunFam" id="1.20.200.10:FF:000003">
    <property type="entry name" value="Histidine ammonia-lyase"/>
    <property type="match status" value="1"/>
</dbReference>
<dbReference type="Gene3D" id="1.20.200.10">
    <property type="entry name" value="Fumarase/aspartase (Central domain)"/>
    <property type="match status" value="1"/>
</dbReference>
<dbReference type="Gene3D" id="1.10.275.10">
    <property type="entry name" value="Fumarase/aspartase (N-terminal domain)"/>
    <property type="match status" value="1"/>
</dbReference>
<dbReference type="HAMAP" id="MF_00229">
    <property type="entry name" value="His_ammonia_lyase"/>
    <property type="match status" value="1"/>
</dbReference>
<dbReference type="InterPro" id="IPR001106">
    <property type="entry name" value="Aromatic_Lyase"/>
</dbReference>
<dbReference type="InterPro" id="IPR024083">
    <property type="entry name" value="Fumarase/histidase_N"/>
</dbReference>
<dbReference type="InterPro" id="IPR005921">
    <property type="entry name" value="HutH"/>
</dbReference>
<dbReference type="InterPro" id="IPR008948">
    <property type="entry name" value="L-Aspartase-like"/>
</dbReference>
<dbReference type="InterPro" id="IPR022313">
    <property type="entry name" value="Phe/His_NH3-lyase_AS"/>
</dbReference>
<dbReference type="NCBIfam" id="TIGR01225">
    <property type="entry name" value="hutH"/>
    <property type="match status" value="1"/>
</dbReference>
<dbReference type="NCBIfam" id="NF006871">
    <property type="entry name" value="PRK09367.1"/>
    <property type="match status" value="1"/>
</dbReference>
<dbReference type="PANTHER" id="PTHR10362">
    <property type="entry name" value="HISTIDINE AMMONIA-LYASE"/>
    <property type="match status" value="1"/>
</dbReference>
<dbReference type="Pfam" id="PF00221">
    <property type="entry name" value="Lyase_aromatic"/>
    <property type="match status" value="1"/>
</dbReference>
<dbReference type="SUPFAM" id="SSF48557">
    <property type="entry name" value="L-aspartase-like"/>
    <property type="match status" value="1"/>
</dbReference>
<dbReference type="PROSITE" id="PS00488">
    <property type="entry name" value="PAL_HISTIDASE"/>
    <property type="match status" value="1"/>
</dbReference>
<comment type="catalytic activity">
    <reaction evidence="1">
        <text>L-histidine = trans-urocanate + NH4(+)</text>
        <dbReference type="Rhea" id="RHEA:21232"/>
        <dbReference type="ChEBI" id="CHEBI:17771"/>
        <dbReference type="ChEBI" id="CHEBI:28938"/>
        <dbReference type="ChEBI" id="CHEBI:57595"/>
        <dbReference type="EC" id="4.3.1.3"/>
    </reaction>
</comment>
<comment type="pathway">
    <text evidence="1">Amino-acid degradation; L-histidine degradation into L-glutamate; N-formimidoyl-L-glutamate from L-histidine: step 1/3.</text>
</comment>
<comment type="subcellular location">
    <subcellularLocation>
        <location evidence="1">Cytoplasm</location>
    </subcellularLocation>
</comment>
<comment type="PTM">
    <text evidence="1">Contains an active site 4-methylidene-imidazol-5-one (MIO), which is formed autocatalytically by cyclization and dehydration of residues Ala-Ser-Gly.</text>
</comment>
<comment type="similarity">
    <text evidence="1">Belongs to the PAL/histidase family.</text>
</comment>
<keyword id="KW-0963">Cytoplasm</keyword>
<keyword id="KW-0369">Histidine metabolism</keyword>
<keyword id="KW-0456">Lyase</keyword>
<proteinExistence type="inferred from homology"/>
<reference key="1">
    <citation type="journal article" date="2005" name="J. Bacteriol.">
        <title>Insights on evolution of virulence and resistance from the complete genome analysis of an early methicillin-resistant Staphylococcus aureus strain and a biofilm-producing methicillin-resistant Staphylococcus epidermidis strain.</title>
        <authorList>
            <person name="Gill S.R."/>
            <person name="Fouts D.E."/>
            <person name="Archer G.L."/>
            <person name="Mongodin E.F."/>
            <person name="DeBoy R.T."/>
            <person name="Ravel J."/>
            <person name="Paulsen I.T."/>
            <person name="Kolonay J.F."/>
            <person name="Brinkac L.M."/>
            <person name="Beanan M.J."/>
            <person name="Dodson R.J."/>
            <person name="Daugherty S.C."/>
            <person name="Madupu R."/>
            <person name="Angiuoli S.V."/>
            <person name="Durkin A.S."/>
            <person name="Haft D.H."/>
            <person name="Vamathevan J.J."/>
            <person name="Khouri H."/>
            <person name="Utterback T.R."/>
            <person name="Lee C."/>
            <person name="Dimitrov G."/>
            <person name="Jiang L."/>
            <person name="Qin H."/>
            <person name="Weidman J."/>
            <person name="Tran K."/>
            <person name="Kang K.H."/>
            <person name="Hance I.R."/>
            <person name="Nelson K.E."/>
            <person name="Fraser C.M."/>
        </authorList>
    </citation>
    <scope>NUCLEOTIDE SEQUENCE [LARGE SCALE GENOMIC DNA]</scope>
    <source>
        <strain>COL</strain>
    </source>
</reference>
<accession>Q5HJY8</accession>
<feature type="chain" id="PRO_0000161029" description="Histidine ammonia-lyase">
    <location>
        <begin position="1"/>
        <end position="504"/>
    </location>
</feature>
<feature type="modified residue" description="2,3-didehydroalanine (Ser)" evidence="1">
    <location>
        <position position="143"/>
    </location>
</feature>
<feature type="cross-link" description="5-imidazolinone (Ala-Gly)" evidence="1">
    <location>
        <begin position="142"/>
        <end position="144"/>
    </location>
</feature>